<keyword id="KW-0031">Aminopeptidase</keyword>
<keyword id="KW-0963">Cytoplasm</keyword>
<keyword id="KW-0378">Hydrolase</keyword>
<keyword id="KW-0645">Protease</keyword>
<keyword id="KW-0720">Serine protease</keyword>
<reference key="1">
    <citation type="journal article" date="2009" name="PLoS Pathog.">
        <title>Genomic evidence for the evolution of Streptococcus equi: host restriction, increased virulence, and genetic exchange with human pathogens.</title>
        <authorList>
            <person name="Holden M.T.G."/>
            <person name="Heather Z."/>
            <person name="Paillot R."/>
            <person name="Steward K.F."/>
            <person name="Webb K."/>
            <person name="Ainslie F."/>
            <person name="Jourdan T."/>
            <person name="Bason N.C."/>
            <person name="Holroyd N.E."/>
            <person name="Mungall K."/>
            <person name="Quail M.A."/>
            <person name="Sanders M."/>
            <person name="Simmonds M."/>
            <person name="Willey D."/>
            <person name="Brooks K."/>
            <person name="Aanensen D.M."/>
            <person name="Spratt B.G."/>
            <person name="Jolley K.A."/>
            <person name="Maiden M.C.J."/>
            <person name="Kehoe M."/>
            <person name="Chanter N."/>
            <person name="Bentley S.D."/>
            <person name="Robinson C."/>
            <person name="Maskell D.J."/>
            <person name="Parkhill J."/>
            <person name="Waller A.S."/>
        </authorList>
    </citation>
    <scope>NUCLEOTIDE SEQUENCE [LARGE SCALE GENOMIC DNA]</scope>
    <source>
        <strain>H70</strain>
    </source>
</reference>
<sequence>MRYNQLSYIPTSLETAVAELQALGFAVQQEQAPKESFAIFLRKLFFHFQDTDYPLSHMIATKELDLLSFLASDEALTKEVFDLVALQVLGFIPAVDFTDTQDFIQKIGFPIVFDSQQLLLNLHQLLATRQKSGVTLIDSLVSQGLLPMDNCYHYFNGKALATFDTTSLIREVVYVEAPLDTDQDGQLDLIKVNIIRPKASTAIPSMMTASPYHQGINETANDKKLHRMEGELSPKAPRRITVEPTDFQPLATKPSRLPVNECQETFSHISSYTLNDYFLARGFANLYVSGVGTAGSTGFMTSGDYAQIESFKAVIDWLNGRATAYTSHKRDYQIKADWSNGLVATTGKSYLGTMSTGLATTGVDGLAVIIAEAAISSWYDYYRENGLVCSPGGYPGEDLDVLTELTYSRNLLPGDYLRHNDHYQELLSQQSQALDRQSGDYNQFWHDRNYLPQADRIKCEVVYTHGLQDWNVKPRQVYNIFNALPDSLGKHLFLHHGEHVYMHNWQSIDFREAMNALLCQKMLGQNNGFTLPTIIWQDNQKEQTWKELTAFGGHSKRQIALGEDHVLIDNHYGEEDFKRYGKDFRAFKAELFEGKANQAVIDILLEEDLPINGQACLKLKLKSSENKGILSAQLLDYGKKKRFGDLPAILELDSIDNGQQFAREALKELPFKDSPYRVVTKGVLNLQHRSGLLTIEDIPNDQWISITFHLQPTIYHMAKGDTLRVVLYTTDFEHTIRDNSNYALTLDLEQSYLLIPTDEEE</sequence>
<accession>C0MEP5</accession>
<feature type="chain" id="PRO_1000212635" description="Xaa-Pro dipeptidyl-peptidase">
    <location>
        <begin position="1"/>
        <end position="761"/>
    </location>
</feature>
<feature type="active site" description="Charge relay system" evidence="1">
    <location>
        <position position="349"/>
    </location>
</feature>
<feature type="active site" description="Charge relay system" evidence="1">
    <location>
        <position position="469"/>
    </location>
</feature>
<feature type="active site" description="Charge relay system" evidence="1">
    <location>
        <position position="499"/>
    </location>
</feature>
<gene>
    <name evidence="1" type="primary">pepX</name>
    <name type="ordered locus">SZO_16580</name>
</gene>
<dbReference type="EC" id="3.4.14.11" evidence="1"/>
<dbReference type="EMBL" id="FM204884">
    <property type="protein sequence ID" value="CAX00420.1"/>
    <property type="molecule type" value="Genomic_DNA"/>
</dbReference>
<dbReference type="SMR" id="C0MEP5"/>
<dbReference type="ESTHER" id="strs7-pepx">
    <property type="family name" value="Lactobacillus_peptidase"/>
</dbReference>
<dbReference type="MEROPS" id="S15.001"/>
<dbReference type="KEGG" id="seq:SZO_16580"/>
<dbReference type="PATRIC" id="fig|40041.11.peg.1779"/>
<dbReference type="eggNOG" id="COG2936">
    <property type="taxonomic scope" value="Bacteria"/>
</dbReference>
<dbReference type="HOGENOM" id="CLU_011800_0_0_9"/>
<dbReference type="Proteomes" id="UP000001368">
    <property type="component" value="Chromosome"/>
</dbReference>
<dbReference type="GO" id="GO:0005737">
    <property type="term" value="C:cytoplasm"/>
    <property type="evidence" value="ECO:0007669"/>
    <property type="project" value="UniProtKB-SubCell"/>
</dbReference>
<dbReference type="GO" id="GO:0004177">
    <property type="term" value="F:aminopeptidase activity"/>
    <property type="evidence" value="ECO:0007669"/>
    <property type="project" value="UniProtKB-KW"/>
</dbReference>
<dbReference type="GO" id="GO:0008239">
    <property type="term" value="F:dipeptidyl-peptidase activity"/>
    <property type="evidence" value="ECO:0007669"/>
    <property type="project" value="UniProtKB-UniRule"/>
</dbReference>
<dbReference type="GO" id="GO:0008236">
    <property type="term" value="F:serine-type peptidase activity"/>
    <property type="evidence" value="ECO:0007669"/>
    <property type="project" value="UniProtKB-KW"/>
</dbReference>
<dbReference type="GO" id="GO:0006508">
    <property type="term" value="P:proteolysis"/>
    <property type="evidence" value="ECO:0007669"/>
    <property type="project" value="UniProtKB-KW"/>
</dbReference>
<dbReference type="Gene3D" id="1.10.246.70">
    <property type="match status" value="1"/>
</dbReference>
<dbReference type="Gene3D" id="3.40.50.1820">
    <property type="entry name" value="alpha/beta hydrolase"/>
    <property type="match status" value="1"/>
</dbReference>
<dbReference type="Gene3D" id="2.60.120.260">
    <property type="entry name" value="Galactose-binding domain-like"/>
    <property type="match status" value="1"/>
</dbReference>
<dbReference type="HAMAP" id="MF_00698">
    <property type="entry name" value="Aminopeptidase_S15"/>
    <property type="match status" value="1"/>
</dbReference>
<dbReference type="InterPro" id="IPR029058">
    <property type="entry name" value="AB_hydrolase_fold"/>
</dbReference>
<dbReference type="InterPro" id="IPR008979">
    <property type="entry name" value="Galactose-bd-like_sf"/>
</dbReference>
<dbReference type="InterPro" id="IPR008252">
    <property type="entry name" value="Pept_S15_Xpro"/>
</dbReference>
<dbReference type="InterPro" id="IPR015251">
    <property type="entry name" value="PepX_N_dom"/>
</dbReference>
<dbReference type="InterPro" id="IPR036313">
    <property type="entry name" value="PepX_N_dom_sf"/>
</dbReference>
<dbReference type="InterPro" id="IPR000383">
    <property type="entry name" value="Xaa-Pro-like_dom"/>
</dbReference>
<dbReference type="InterPro" id="IPR013736">
    <property type="entry name" value="Xaa-Pro_dipept_C"/>
</dbReference>
<dbReference type="InterPro" id="IPR050585">
    <property type="entry name" value="Xaa-Pro_dipeptidyl-ppase/CocE"/>
</dbReference>
<dbReference type="NCBIfam" id="NF003783">
    <property type="entry name" value="PRK05371.1-4"/>
    <property type="match status" value="1"/>
</dbReference>
<dbReference type="PANTHER" id="PTHR43056:SF10">
    <property type="entry name" value="COCE_NOND FAMILY, PUTATIVE (AFU_ORTHOLOGUE AFUA_7G00600)-RELATED"/>
    <property type="match status" value="1"/>
</dbReference>
<dbReference type="PANTHER" id="PTHR43056">
    <property type="entry name" value="PEPTIDASE S9 PROLYL OLIGOPEPTIDASE"/>
    <property type="match status" value="1"/>
</dbReference>
<dbReference type="Pfam" id="PF02129">
    <property type="entry name" value="Peptidase_S15"/>
    <property type="match status" value="1"/>
</dbReference>
<dbReference type="Pfam" id="PF08530">
    <property type="entry name" value="PepX_C"/>
    <property type="match status" value="1"/>
</dbReference>
<dbReference type="Pfam" id="PF09168">
    <property type="entry name" value="PepX_N"/>
    <property type="match status" value="1"/>
</dbReference>
<dbReference type="PRINTS" id="PR00923">
    <property type="entry name" value="LACTOPTASE"/>
</dbReference>
<dbReference type="SMART" id="SM00939">
    <property type="entry name" value="PepX_C"/>
    <property type="match status" value="1"/>
</dbReference>
<dbReference type="SMART" id="SM00940">
    <property type="entry name" value="PepX_N"/>
    <property type="match status" value="1"/>
</dbReference>
<dbReference type="SUPFAM" id="SSF53474">
    <property type="entry name" value="alpha/beta-Hydrolases"/>
    <property type="match status" value="1"/>
</dbReference>
<dbReference type="SUPFAM" id="SSF49785">
    <property type="entry name" value="Galactose-binding domain-like"/>
    <property type="match status" value="1"/>
</dbReference>
<dbReference type="SUPFAM" id="SSF81761">
    <property type="entry name" value="X-Prolyl dipeptidyl aminopeptidase PepX, N-terminal domain"/>
    <property type="match status" value="1"/>
</dbReference>
<evidence type="ECO:0000255" key="1">
    <source>
        <dbReference type="HAMAP-Rule" id="MF_00698"/>
    </source>
</evidence>
<protein>
    <recommendedName>
        <fullName evidence="1">Xaa-Pro dipeptidyl-peptidase</fullName>
        <ecNumber evidence="1">3.4.14.11</ecNumber>
    </recommendedName>
    <alternativeName>
        <fullName evidence="1">X-Pro dipeptidyl-peptidase</fullName>
    </alternativeName>
    <alternativeName>
        <fullName evidence="1">X-prolyl-dipeptidyl aminopeptidase</fullName>
        <shortName evidence="1">X-PDAP</shortName>
    </alternativeName>
</protein>
<comment type="function">
    <text evidence="1">Removes N-terminal dipeptides sequentially from polypeptides having unsubstituted N-termini provided that the penultimate residue is proline.</text>
</comment>
<comment type="catalytic activity">
    <reaction evidence="1">
        <text>Hydrolyzes Xaa-Pro-|- bonds to release unblocked, N-terminal dipeptides from substrates including Ala-Pro-|-p-nitroanilide and (sequentially) Tyr-Pro-|-Phe-Pro-|-Gly-Pro-|-Ile.</text>
        <dbReference type="EC" id="3.4.14.11"/>
    </reaction>
</comment>
<comment type="subunit">
    <text evidence="1">Homodimer.</text>
</comment>
<comment type="subcellular location">
    <subcellularLocation>
        <location evidence="1">Cytoplasm</location>
    </subcellularLocation>
</comment>
<comment type="similarity">
    <text evidence="1">Belongs to the peptidase S15 family.</text>
</comment>
<name>PEPX_STRS7</name>
<organism>
    <name type="scientific">Streptococcus equi subsp. zooepidemicus (strain H70)</name>
    <dbReference type="NCBI Taxonomy" id="553483"/>
    <lineage>
        <taxon>Bacteria</taxon>
        <taxon>Bacillati</taxon>
        <taxon>Bacillota</taxon>
        <taxon>Bacilli</taxon>
        <taxon>Lactobacillales</taxon>
        <taxon>Streptococcaceae</taxon>
        <taxon>Streptococcus</taxon>
    </lineage>
</organism>
<proteinExistence type="inferred from homology"/>